<gene>
    <name type="ordered locus">VV1_1847</name>
</gene>
<feature type="chain" id="PRO_0000176022" description="UPF0178 protein VV1_1847">
    <location>
        <begin position="1"/>
        <end position="149"/>
    </location>
</feature>
<protein>
    <recommendedName>
        <fullName evidence="1">UPF0178 protein VV1_1847</fullName>
    </recommendedName>
</protein>
<comment type="similarity">
    <text evidence="1">Belongs to the UPF0178 family.</text>
</comment>
<dbReference type="EMBL" id="AE016795">
    <property type="protein sequence ID" value="AAO10253.1"/>
    <property type="molecule type" value="Genomic_DNA"/>
</dbReference>
<dbReference type="RefSeq" id="WP_011079753.1">
    <property type="nucleotide sequence ID" value="NC_004459.3"/>
</dbReference>
<dbReference type="KEGG" id="vvu:VV1_1847"/>
<dbReference type="HOGENOM" id="CLU_106619_2_1_6"/>
<dbReference type="Proteomes" id="UP000002275">
    <property type="component" value="Chromosome 1"/>
</dbReference>
<dbReference type="CDD" id="cd18720">
    <property type="entry name" value="PIN_YqxD-like"/>
    <property type="match status" value="1"/>
</dbReference>
<dbReference type="HAMAP" id="MF_00489">
    <property type="entry name" value="UPF0178"/>
    <property type="match status" value="1"/>
</dbReference>
<dbReference type="InterPro" id="IPR003791">
    <property type="entry name" value="UPF0178"/>
</dbReference>
<dbReference type="NCBIfam" id="NF001095">
    <property type="entry name" value="PRK00124.1"/>
    <property type="match status" value="1"/>
</dbReference>
<dbReference type="PANTHER" id="PTHR35146">
    <property type="entry name" value="UPF0178 PROTEIN YAII"/>
    <property type="match status" value="1"/>
</dbReference>
<dbReference type="PANTHER" id="PTHR35146:SF1">
    <property type="entry name" value="UPF0178 PROTEIN YAII"/>
    <property type="match status" value="1"/>
</dbReference>
<dbReference type="Pfam" id="PF02639">
    <property type="entry name" value="DUF188"/>
    <property type="match status" value="1"/>
</dbReference>
<organism>
    <name type="scientific">Vibrio vulnificus (strain CMCP6)</name>
    <dbReference type="NCBI Taxonomy" id="216895"/>
    <lineage>
        <taxon>Bacteria</taxon>
        <taxon>Pseudomonadati</taxon>
        <taxon>Pseudomonadota</taxon>
        <taxon>Gammaproteobacteria</taxon>
        <taxon>Vibrionales</taxon>
        <taxon>Vibrionaceae</taxon>
        <taxon>Vibrio</taxon>
    </lineage>
</organism>
<evidence type="ECO:0000255" key="1">
    <source>
        <dbReference type="HAMAP-Rule" id="MF_00489"/>
    </source>
</evidence>
<name>Y1847_VIBVU</name>
<proteinExistence type="inferred from homology"/>
<reference key="1">
    <citation type="submission" date="2002-12" db="EMBL/GenBank/DDBJ databases">
        <title>Complete genome sequence of Vibrio vulnificus CMCP6.</title>
        <authorList>
            <person name="Rhee J.H."/>
            <person name="Kim S.Y."/>
            <person name="Chung S.S."/>
            <person name="Kim J.J."/>
            <person name="Moon Y.H."/>
            <person name="Jeong H."/>
            <person name="Choy H.E."/>
        </authorList>
    </citation>
    <scope>NUCLEOTIDE SEQUENCE [LARGE SCALE GENOMIC DNA]</scope>
    <source>
        <strain>CMCP6</strain>
    </source>
</reference>
<sequence>MKIWVDADACPKVIRETIVRAAERTGVECTFVANHVVPVPRRPNIHSLQVPAGFDIADNEIVKRVEPNDLVITSDIPLADEVITKGALALSSRGELYTKDTIKARLNIRDFMETMRSSGIQTGGPAALSQTERREFANHLDRILAKFKK</sequence>
<accession>Q8DBH0</accession>